<proteinExistence type="inferred from homology"/>
<dbReference type="EMBL" id="AL591893">
    <property type="status" value="NOT_ANNOTATED_CDS"/>
    <property type="molecule type" value="Genomic_DNA"/>
</dbReference>
<dbReference type="SMR" id="A8MUI8"/>
<dbReference type="GlyGen" id="A8MUI8">
    <property type="glycosylation" value="1 site"/>
</dbReference>
<dbReference type="iPTMnet" id="A8MUI8"/>
<dbReference type="PhosphoSitePlus" id="A8MUI8"/>
<dbReference type="BioMuta" id="-"/>
<dbReference type="jPOST" id="A8MUI8"/>
<dbReference type="MassIVE" id="A8MUI8"/>
<dbReference type="neXtProt" id="NX_A8MUI8"/>
<dbReference type="InParanoid" id="A8MUI8"/>
<dbReference type="PAN-GO" id="A8MUI8">
    <property type="GO annotations" value="4 GO annotations based on evolutionary models"/>
</dbReference>
<dbReference type="PhylomeDB" id="A8MUI8"/>
<dbReference type="Pharos" id="A8MUI8">
    <property type="development level" value="Tdark"/>
</dbReference>
<dbReference type="PRO" id="PR:A8MUI8"/>
<dbReference type="Proteomes" id="UP000005640">
    <property type="component" value="Unplaced"/>
</dbReference>
<dbReference type="RNAct" id="A8MUI8">
    <property type="molecule type" value="protein"/>
</dbReference>
<dbReference type="InterPro" id="IPR043220">
    <property type="entry name" value="POM121-like_prot_1"/>
</dbReference>
<dbReference type="PANTHER" id="PTHR15566">
    <property type="entry name" value="POM121-LIKE"/>
    <property type="match status" value="1"/>
</dbReference>
<dbReference type="PANTHER" id="PTHR15566:SF7">
    <property type="entry name" value="UPF0607 PROTEIN ENSP00000332738-RELATED"/>
    <property type="match status" value="1"/>
</dbReference>
<dbReference type="Pfam" id="PF15229">
    <property type="entry name" value="POM121"/>
    <property type="match status" value="1"/>
</dbReference>
<organism>
    <name type="scientific">Homo sapiens</name>
    <name type="common">Human</name>
    <dbReference type="NCBI Taxonomy" id="9606"/>
    <lineage>
        <taxon>Eukaryota</taxon>
        <taxon>Metazoa</taxon>
        <taxon>Chordata</taxon>
        <taxon>Craniata</taxon>
        <taxon>Vertebrata</taxon>
        <taxon>Euteleostomi</taxon>
        <taxon>Mammalia</taxon>
        <taxon>Eutheria</taxon>
        <taxon>Euarchontoglires</taxon>
        <taxon>Primates</taxon>
        <taxon>Haplorrhini</taxon>
        <taxon>Catarrhini</taxon>
        <taxon>Hominidae</taxon>
        <taxon>Homo</taxon>
    </lineage>
</organism>
<feature type="chain" id="PRO_0000342523" description="Putative UPF0607 protein ENSP00000383783">
    <location>
        <begin position="1"/>
        <end position="341"/>
    </location>
</feature>
<feature type="region of interest" description="Disordered" evidence="1">
    <location>
        <begin position="75"/>
        <end position="115"/>
    </location>
</feature>
<feature type="region of interest" description="Disordered" evidence="1">
    <location>
        <begin position="216"/>
        <end position="278"/>
    </location>
</feature>
<feature type="compositionally biased region" description="Basic and acidic residues" evidence="1">
    <location>
        <begin position="75"/>
        <end position="101"/>
    </location>
</feature>
<feature type="compositionally biased region" description="Low complexity" evidence="1">
    <location>
        <begin position="234"/>
        <end position="245"/>
    </location>
</feature>
<evidence type="ECO:0000256" key="1">
    <source>
        <dbReference type="SAM" id="MobiDB-lite"/>
    </source>
</evidence>
<evidence type="ECO:0000305" key="2"/>
<reference key="1">
    <citation type="journal article" date="2006" name="Nature">
        <title>The DNA sequence and biological annotation of human chromosome 1.</title>
        <authorList>
            <person name="Gregory S.G."/>
            <person name="Barlow K.F."/>
            <person name="McLay K.E."/>
            <person name="Kaul R."/>
            <person name="Swarbreck D."/>
            <person name="Dunham A."/>
            <person name="Scott C.E."/>
            <person name="Howe K.L."/>
            <person name="Woodfine K."/>
            <person name="Spencer C.C.A."/>
            <person name="Jones M.C."/>
            <person name="Gillson C."/>
            <person name="Searle S."/>
            <person name="Zhou Y."/>
            <person name="Kokocinski F."/>
            <person name="McDonald L."/>
            <person name="Evans R."/>
            <person name="Phillips K."/>
            <person name="Atkinson A."/>
            <person name="Cooper R."/>
            <person name="Jones C."/>
            <person name="Hall R.E."/>
            <person name="Andrews T.D."/>
            <person name="Lloyd C."/>
            <person name="Ainscough R."/>
            <person name="Almeida J.P."/>
            <person name="Ambrose K.D."/>
            <person name="Anderson F."/>
            <person name="Andrew R.W."/>
            <person name="Ashwell R.I.S."/>
            <person name="Aubin K."/>
            <person name="Babbage A.K."/>
            <person name="Bagguley C.L."/>
            <person name="Bailey J."/>
            <person name="Beasley H."/>
            <person name="Bethel G."/>
            <person name="Bird C.P."/>
            <person name="Bray-Allen S."/>
            <person name="Brown J.Y."/>
            <person name="Brown A.J."/>
            <person name="Buckley D."/>
            <person name="Burton J."/>
            <person name="Bye J."/>
            <person name="Carder C."/>
            <person name="Chapman J.C."/>
            <person name="Clark S.Y."/>
            <person name="Clarke G."/>
            <person name="Clee C."/>
            <person name="Cobley V."/>
            <person name="Collier R.E."/>
            <person name="Corby N."/>
            <person name="Coville G.J."/>
            <person name="Davies J."/>
            <person name="Deadman R."/>
            <person name="Dunn M."/>
            <person name="Earthrowl M."/>
            <person name="Ellington A.G."/>
            <person name="Errington H."/>
            <person name="Frankish A."/>
            <person name="Frankland J."/>
            <person name="French L."/>
            <person name="Garner P."/>
            <person name="Garnett J."/>
            <person name="Gay L."/>
            <person name="Ghori M.R.J."/>
            <person name="Gibson R."/>
            <person name="Gilby L.M."/>
            <person name="Gillett W."/>
            <person name="Glithero R.J."/>
            <person name="Grafham D.V."/>
            <person name="Griffiths C."/>
            <person name="Griffiths-Jones S."/>
            <person name="Grocock R."/>
            <person name="Hammond S."/>
            <person name="Harrison E.S.I."/>
            <person name="Hart E."/>
            <person name="Haugen E."/>
            <person name="Heath P.D."/>
            <person name="Holmes S."/>
            <person name="Holt K."/>
            <person name="Howden P.J."/>
            <person name="Hunt A.R."/>
            <person name="Hunt S.E."/>
            <person name="Hunter G."/>
            <person name="Isherwood J."/>
            <person name="James R."/>
            <person name="Johnson C."/>
            <person name="Johnson D."/>
            <person name="Joy A."/>
            <person name="Kay M."/>
            <person name="Kershaw J.K."/>
            <person name="Kibukawa M."/>
            <person name="Kimberley A.M."/>
            <person name="King A."/>
            <person name="Knights A.J."/>
            <person name="Lad H."/>
            <person name="Laird G."/>
            <person name="Lawlor S."/>
            <person name="Leongamornlert D.A."/>
            <person name="Lloyd D.M."/>
            <person name="Loveland J."/>
            <person name="Lovell J."/>
            <person name="Lush M.J."/>
            <person name="Lyne R."/>
            <person name="Martin S."/>
            <person name="Mashreghi-Mohammadi M."/>
            <person name="Matthews L."/>
            <person name="Matthews N.S.W."/>
            <person name="McLaren S."/>
            <person name="Milne S."/>
            <person name="Mistry S."/>
            <person name="Moore M.J.F."/>
            <person name="Nickerson T."/>
            <person name="O'Dell C.N."/>
            <person name="Oliver K."/>
            <person name="Palmeiri A."/>
            <person name="Palmer S.A."/>
            <person name="Parker A."/>
            <person name="Patel D."/>
            <person name="Pearce A.V."/>
            <person name="Peck A.I."/>
            <person name="Pelan S."/>
            <person name="Phelps K."/>
            <person name="Phillimore B.J."/>
            <person name="Plumb R."/>
            <person name="Rajan J."/>
            <person name="Raymond C."/>
            <person name="Rouse G."/>
            <person name="Saenphimmachak C."/>
            <person name="Sehra H.K."/>
            <person name="Sheridan E."/>
            <person name="Shownkeen R."/>
            <person name="Sims S."/>
            <person name="Skuce C.D."/>
            <person name="Smith M."/>
            <person name="Steward C."/>
            <person name="Subramanian S."/>
            <person name="Sycamore N."/>
            <person name="Tracey A."/>
            <person name="Tromans A."/>
            <person name="Van Helmond Z."/>
            <person name="Wall M."/>
            <person name="Wallis J.M."/>
            <person name="White S."/>
            <person name="Whitehead S.L."/>
            <person name="Wilkinson J.E."/>
            <person name="Willey D.L."/>
            <person name="Williams H."/>
            <person name="Wilming L."/>
            <person name="Wray P.W."/>
            <person name="Wu Z."/>
            <person name="Coulson A."/>
            <person name="Vaudin M."/>
            <person name="Sulston J.E."/>
            <person name="Durbin R.M."/>
            <person name="Hubbard T."/>
            <person name="Wooster R."/>
            <person name="Dunham I."/>
            <person name="Carter N.P."/>
            <person name="McVean G."/>
            <person name="Ross M.T."/>
            <person name="Harrow J."/>
            <person name="Olson M.V."/>
            <person name="Beck S."/>
            <person name="Rogers J."/>
            <person name="Bentley D.R."/>
        </authorList>
    </citation>
    <scope>NUCLEOTIDE SEQUENCE [LARGE SCALE GENOMIC DNA]</scope>
</reference>
<sequence>MRLCLIPQNTGTPQRVLPPVVWSPPSRKKPMLSACNSMMFGHLSPVRIPHLRGKFNLQLPSLDEQVIPARLPKMEVRAEEPKEATEVKDQVETQGQEDNKRGPCSNGEAASTSSLLETQGNLTSSWYNPRPLEGNVHLKSLIEKNQTDKAQVHAVSFYSKDHEVASSHSPAGGILSFGKPDPLPTVLPAPVPGCSLWPEKAALKVLGKDHLPSSPGLLMVGEDMQPKDPAALGSSRSSPSRAASHSSHKRKLSEPPLQLQPTPPLQLKWDRDEGPPPAKFPCLSPEALLVSQASQREGRLQQGNMCKNMRVLSRTSKFRRLRELLRRRKKRRQGRCGSSHL</sequence>
<name>YA034_HUMAN</name>
<protein>
    <recommendedName>
        <fullName>Putative UPF0607 protein ENSP00000383783</fullName>
    </recommendedName>
</protein>
<accession>A8MUI8</accession>
<keyword id="KW-1185">Reference proteome</keyword>
<comment type="similarity">
    <text evidence="2">Belongs to the UPF0607 family.</text>
</comment>